<name>MNMG_STRPN</name>
<keyword id="KW-0963">Cytoplasm</keyword>
<keyword id="KW-0274">FAD</keyword>
<keyword id="KW-0285">Flavoprotein</keyword>
<keyword id="KW-0520">NAD</keyword>
<keyword id="KW-1185">Reference proteome</keyword>
<keyword id="KW-0819">tRNA processing</keyword>
<dbReference type="EMBL" id="AE005672">
    <property type="protein sequence ID" value="AAK74306.1"/>
    <property type="molecule type" value="Genomic_DNA"/>
</dbReference>
<dbReference type="PIR" id="A95014">
    <property type="entry name" value="A95014"/>
</dbReference>
<dbReference type="RefSeq" id="WP_000220964.1">
    <property type="nucleotide sequence ID" value="NZ_CP155539.1"/>
</dbReference>
<dbReference type="SMR" id="Q97T36"/>
<dbReference type="PaxDb" id="170187-SP_0120"/>
<dbReference type="EnsemblBacteria" id="AAK74306">
    <property type="protein sequence ID" value="AAK74306"/>
    <property type="gene ID" value="SP_0120"/>
</dbReference>
<dbReference type="GeneID" id="45652375"/>
<dbReference type="KEGG" id="spn:SP_0120"/>
<dbReference type="eggNOG" id="COG0445">
    <property type="taxonomic scope" value="Bacteria"/>
</dbReference>
<dbReference type="PhylomeDB" id="Q97T36"/>
<dbReference type="BioCyc" id="SPNE170187:G1FZB-125-MONOMER"/>
<dbReference type="Proteomes" id="UP000000585">
    <property type="component" value="Chromosome"/>
</dbReference>
<dbReference type="GO" id="GO:0005829">
    <property type="term" value="C:cytosol"/>
    <property type="evidence" value="ECO:0007669"/>
    <property type="project" value="TreeGrafter"/>
</dbReference>
<dbReference type="GO" id="GO:0050660">
    <property type="term" value="F:flavin adenine dinucleotide binding"/>
    <property type="evidence" value="ECO:0007669"/>
    <property type="project" value="UniProtKB-UniRule"/>
</dbReference>
<dbReference type="GO" id="GO:0030488">
    <property type="term" value="P:tRNA methylation"/>
    <property type="evidence" value="ECO:0007669"/>
    <property type="project" value="TreeGrafter"/>
</dbReference>
<dbReference type="GO" id="GO:0002098">
    <property type="term" value="P:tRNA wobble uridine modification"/>
    <property type="evidence" value="ECO:0007669"/>
    <property type="project" value="InterPro"/>
</dbReference>
<dbReference type="FunFam" id="1.10.10.1800:FF:000001">
    <property type="entry name" value="tRNA uridine 5-carboxymethylaminomethyl modification enzyme MnmG"/>
    <property type="match status" value="1"/>
</dbReference>
<dbReference type="FunFam" id="1.10.150.570:FF:000001">
    <property type="entry name" value="tRNA uridine 5-carboxymethylaminomethyl modification enzyme MnmG"/>
    <property type="match status" value="1"/>
</dbReference>
<dbReference type="FunFam" id="3.50.50.60:FF:000002">
    <property type="entry name" value="tRNA uridine 5-carboxymethylaminomethyl modification enzyme MnmG"/>
    <property type="match status" value="1"/>
</dbReference>
<dbReference type="FunFam" id="3.50.50.60:FF:000063">
    <property type="entry name" value="tRNA uridine 5-carboxymethylaminomethyl modification enzyme MnmG"/>
    <property type="match status" value="1"/>
</dbReference>
<dbReference type="Gene3D" id="3.50.50.60">
    <property type="entry name" value="FAD/NAD(P)-binding domain"/>
    <property type="match status" value="2"/>
</dbReference>
<dbReference type="Gene3D" id="1.10.150.570">
    <property type="entry name" value="GidA associated domain, C-terminal subdomain"/>
    <property type="match status" value="1"/>
</dbReference>
<dbReference type="Gene3D" id="1.10.10.1800">
    <property type="entry name" value="tRNA uridine 5-carboxymethylaminomethyl modification enzyme MnmG/GidA"/>
    <property type="match status" value="1"/>
</dbReference>
<dbReference type="HAMAP" id="MF_00129">
    <property type="entry name" value="MnmG_GidA"/>
    <property type="match status" value="1"/>
</dbReference>
<dbReference type="InterPro" id="IPR036188">
    <property type="entry name" value="FAD/NAD-bd_sf"/>
</dbReference>
<dbReference type="InterPro" id="IPR049312">
    <property type="entry name" value="GIDA_C_N"/>
</dbReference>
<dbReference type="InterPro" id="IPR004416">
    <property type="entry name" value="MnmG"/>
</dbReference>
<dbReference type="InterPro" id="IPR002218">
    <property type="entry name" value="MnmG-rel"/>
</dbReference>
<dbReference type="InterPro" id="IPR020595">
    <property type="entry name" value="MnmG-rel_CS"/>
</dbReference>
<dbReference type="InterPro" id="IPR026904">
    <property type="entry name" value="MnmG_C"/>
</dbReference>
<dbReference type="InterPro" id="IPR047001">
    <property type="entry name" value="MnmG_C_subdom"/>
</dbReference>
<dbReference type="InterPro" id="IPR044920">
    <property type="entry name" value="MnmG_C_subdom_sf"/>
</dbReference>
<dbReference type="InterPro" id="IPR040131">
    <property type="entry name" value="MnmG_N"/>
</dbReference>
<dbReference type="NCBIfam" id="TIGR00136">
    <property type="entry name" value="mnmG_gidA"/>
    <property type="match status" value="1"/>
</dbReference>
<dbReference type="PANTHER" id="PTHR11806">
    <property type="entry name" value="GLUCOSE INHIBITED DIVISION PROTEIN A"/>
    <property type="match status" value="1"/>
</dbReference>
<dbReference type="PANTHER" id="PTHR11806:SF0">
    <property type="entry name" value="PROTEIN MTO1 HOMOLOG, MITOCHONDRIAL"/>
    <property type="match status" value="1"/>
</dbReference>
<dbReference type="Pfam" id="PF01134">
    <property type="entry name" value="GIDA"/>
    <property type="match status" value="1"/>
</dbReference>
<dbReference type="Pfam" id="PF21680">
    <property type="entry name" value="GIDA_C_1st"/>
    <property type="match status" value="1"/>
</dbReference>
<dbReference type="Pfam" id="PF13932">
    <property type="entry name" value="SAM_GIDA_C"/>
    <property type="match status" value="1"/>
</dbReference>
<dbReference type="PRINTS" id="PR00411">
    <property type="entry name" value="PNDRDTASEI"/>
</dbReference>
<dbReference type="SMART" id="SM01228">
    <property type="entry name" value="GIDA_assoc_3"/>
    <property type="match status" value="1"/>
</dbReference>
<dbReference type="SUPFAM" id="SSF51905">
    <property type="entry name" value="FAD/NAD(P)-binding domain"/>
    <property type="match status" value="1"/>
</dbReference>
<dbReference type="PROSITE" id="PS01280">
    <property type="entry name" value="GIDA_1"/>
    <property type="match status" value="1"/>
</dbReference>
<dbReference type="PROSITE" id="PS01281">
    <property type="entry name" value="GIDA_2"/>
    <property type="match status" value="1"/>
</dbReference>
<sequence>MTYHFTEEYDIIVIGAGHAGVEASLAASRMGCKVLLATINIEMLAFMPCNPSIGGSAKGIVVREVDALGGEMAKTIDKTYIQMKMLNTGKGPAVRALRAQADKELYSKEMRKTVENQENLTLRQTMIDEILVEDGKVVGVRTATHQEYAAKAVIVTTGTALRGEIIIGDLKYSSGPNHSLASINLADNLKELGLEIGRFKTGTPPRVKASSINYDVTEIQPGDEVPNHFSYTSRDEDYVKDQVPCWLTYTNGTSHEIIQNNLHRAPMFTGVVKGVGPRYCPSIEDKIVRFADKERHQLFLEPEGRNTEEVYVQGLSTSLPEDVQRDLVHSIKGLENAEMMRTGYAIEYDMVLPHQLRATLETKKISGLFTAGQTNGTSGYEEAAGQGIIAGINAALKIQGKPELILKRSDGYIGVMIDDLVTKGTIEPYRLLTSRAEYRLILRHDNADMRLTEMGREIGLVDDERWARFEIKKNQFDNEMKRLDSIKLKPVKETNAKVEEMGFKPLTDAVTAKEFLRRPEVSYQDVVAFIGPAAEDLDDKIIELIETEIKYEGYISKAMDQVAKMKRMEEKRIPANIDWDDIDSIATEARQKFKLINPETIGQASRISGVNPADISILMVYLEGKNRSISKTLQKSK</sequence>
<evidence type="ECO:0000255" key="1">
    <source>
        <dbReference type="HAMAP-Rule" id="MF_00129"/>
    </source>
</evidence>
<gene>
    <name evidence="1" type="primary">mnmG</name>
    <name evidence="1" type="synonym">gidA</name>
    <name type="ordered locus">SP_0120</name>
</gene>
<protein>
    <recommendedName>
        <fullName evidence="1">tRNA uridine 5-carboxymethylaminomethyl modification enzyme MnmG</fullName>
    </recommendedName>
    <alternativeName>
        <fullName evidence="1">Glucose-inhibited division protein A</fullName>
    </alternativeName>
</protein>
<comment type="function">
    <text evidence="1">NAD-binding protein involved in the addition of a carboxymethylaminomethyl (cmnm) group at the wobble position (U34) of certain tRNAs, forming tRNA-cmnm(5)s(2)U34.</text>
</comment>
<comment type="cofactor">
    <cofactor evidence="1">
        <name>FAD</name>
        <dbReference type="ChEBI" id="CHEBI:57692"/>
    </cofactor>
</comment>
<comment type="subunit">
    <text evidence="1">Homodimer. Heterotetramer of two MnmE and two MnmG subunits.</text>
</comment>
<comment type="subcellular location">
    <subcellularLocation>
        <location evidence="1">Cytoplasm</location>
    </subcellularLocation>
</comment>
<comment type="similarity">
    <text evidence="1">Belongs to the MnmG family.</text>
</comment>
<reference key="1">
    <citation type="journal article" date="2001" name="Science">
        <title>Complete genome sequence of a virulent isolate of Streptococcus pneumoniae.</title>
        <authorList>
            <person name="Tettelin H."/>
            <person name="Nelson K.E."/>
            <person name="Paulsen I.T."/>
            <person name="Eisen J.A."/>
            <person name="Read T.D."/>
            <person name="Peterson S.N."/>
            <person name="Heidelberg J.F."/>
            <person name="DeBoy R.T."/>
            <person name="Haft D.H."/>
            <person name="Dodson R.J."/>
            <person name="Durkin A.S."/>
            <person name="Gwinn M.L."/>
            <person name="Kolonay J.F."/>
            <person name="Nelson W.C."/>
            <person name="Peterson J.D."/>
            <person name="Umayam L.A."/>
            <person name="White O."/>
            <person name="Salzberg S.L."/>
            <person name="Lewis M.R."/>
            <person name="Radune D."/>
            <person name="Holtzapple E.K."/>
            <person name="Khouri H.M."/>
            <person name="Wolf A.M."/>
            <person name="Utterback T.R."/>
            <person name="Hansen C.L."/>
            <person name="McDonald L.A."/>
            <person name="Feldblyum T.V."/>
            <person name="Angiuoli S.V."/>
            <person name="Dickinson T."/>
            <person name="Hickey E.K."/>
            <person name="Holt I.E."/>
            <person name="Loftus B.J."/>
            <person name="Yang F."/>
            <person name="Smith H.O."/>
            <person name="Venter J.C."/>
            <person name="Dougherty B.A."/>
            <person name="Morrison D.A."/>
            <person name="Hollingshead S.K."/>
            <person name="Fraser C.M."/>
        </authorList>
    </citation>
    <scope>NUCLEOTIDE SEQUENCE [LARGE SCALE GENOMIC DNA]</scope>
    <source>
        <strain>ATCC BAA-334 / TIGR4</strain>
    </source>
</reference>
<feature type="chain" id="PRO_0000117187" description="tRNA uridine 5-carboxymethylaminomethyl modification enzyme MnmG">
    <location>
        <begin position="1"/>
        <end position="637"/>
    </location>
</feature>
<feature type="binding site" evidence="1">
    <location>
        <begin position="15"/>
        <end position="20"/>
    </location>
    <ligand>
        <name>FAD</name>
        <dbReference type="ChEBI" id="CHEBI:57692"/>
    </ligand>
</feature>
<feature type="binding site" evidence="1">
    <location>
        <position position="127"/>
    </location>
    <ligand>
        <name>FAD</name>
        <dbReference type="ChEBI" id="CHEBI:57692"/>
    </ligand>
</feature>
<feature type="binding site" evidence="1">
    <location>
        <position position="182"/>
    </location>
    <ligand>
        <name>FAD</name>
        <dbReference type="ChEBI" id="CHEBI:57692"/>
    </ligand>
</feature>
<feature type="binding site" evidence="1">
    <location>
        <begin position="276"/>
        <end position="290"/>
    </location>
    <ligand>
        <name>NAD(+)</name>
        <dbReference type="ChEBI" id="CHEBI:57540"/>
    </ligand>
</feature>
<feature type="binding site" evidence="1">
    <location>
        <position position="373"/>
    </location>
    <ligand>
        <name>FAD</name>
        <dbReference type="ChEBI" id="CHEBI:57692"/>
    </ligand>
</feature>
<organism>
    <name type="scientific">Streptococcus pneumoniae serotype 4 (strain ATCC BAA-334 / TIGR4)</name>
    <dbReference type="NCBI Taxonomy" id="170187"/>
    <lineage>
        <taxon>Bacteria</taxon>
        <taxon>Bacillati</taxon>
        <taxon>Bacillota</taxon>
        <taxon>Bacilli</taxon>
        <taxon>Lactobacillales</taxon>
        <taxon>Streptococcaceae</taxon>
        <taxon>Streptococcus</taxon>
    </lineage>
</organism>
<proteinExistence type="inferred from homology"/>
<accession>Q97T36</accession>